<name>SYK_SHEPA</name>
<accession>A8H0J7</accession>
<reference key="1">
    <citation type="submission" date="2007-10" db="EMBL/GenBank/DDBJ databases">
        <title>Complete sequence of Shewanella pealeana ATCC 700345.</title>
        <authorList>
            <consortium name="US DOE Joint Genome Institute"/>
            <person name="Copeland A."/>
            <person name="Lucas S."/>
            <person name="Lapidus A."/>
            <person name="Barry K."/>
            <person name="Glavina del Rio T."/>
            <person name="Dalin E."/>
            <person name="Tice H."/>
            <person name="Pitluck S."/>
            <person name="Chertkov O."/>
            <person name="Brettin T."/>
            <person name="Bruce D."/>
            <person name="Detter J.C."/>
            <person name="Han C."/>
            <person name="Schmutz J."/>
            <person name="Larimer F."/>
            <person name="Land M."/>
            <person name="Hauser L."/>
            <person name="Kyrpides N."/>
            <person name="Kim E."/>
            <person name="Zhao J.-S.Z."/>
            <person name="Manno D."/>
            <person name="Hawari J."/>
            <person name="Richardson P."/>
        </authorList>
    </citation>
    <scope>NUCLEOTIDE SEQUENCE [LARGE SCALE GENOMIC DNA]</scope>
    <source>
        <strain>ATCC 700345 / ANG-SQ1</strain>
    </source>
</reference>
<gene>
    <name evidence="1" type="primary">lysS</name>
    <name type="ordered locus">Spea_0757</name>
</gene>
<feature type="chain" id="PRO_1000078511" description="Lysine--tRNA ligase">
    <location>
        <begin position="1"/>
        <end position="501"/>
    </location>
</feature>
<feature type="binding site" evidence="1">
    <location>
        <position position="410"/>
    </location>
    <ligand>
        <name>Mg(2+)</name>
        <dbReference type="ChEBI" id="CHEBI:18420"/>
        <label>1</label>
    </ligand>
</feature>
<feature type="binding site" evidence="1">
    <location>
        <position position="417"/>
    </location>
    <ligand>
        <name>Mg(2+)</name>
        <dbReference type="ChEBI" id="CHEBI:18420"/>
        <label>1</label>
    </ligand>
</feature>
<feature type="binding site" evidence="1">
    <location>
        <position position="417"/>
    </location>
    <ligand>
        <name>Mg(2+)</name>
        <dbReference type="ChEBI" id="CHEBI:18420"/>
        <label>2</label>
    </ligand>
</feature>
<keyword id="KW-0030">Aminoacyl-tRNA synthetase</keyword>
<keyword id="KW-0067">ATP-binding</keyword>
<keyword id="KW-0963">Cytoplasm</keyword>
<keyword id="KW-0436">Ligase</keyword>
<keyword id="KW-0460">Magnesium</keyword>
<keyword id="KW-0479">Metal-binding</keyword>
<keyword id="KW-0547">Nucleotide-binding</keyword>
<keyword id="KW-0648">Protein biosynthesis</keyword>
<keyword id="KW-1185">Reference proteome</keyword>
<comment type="catalytic activity">
    <reaction evidence="1">
        <text>tRNA(Lys) + L-lysine + ATP = L-lysyl-tRNA(Lys) + AMP + diphosphate</text>
        <dbReference type="Rhea" id="RHEA:20792"/>
        <dbReference type="Rhea" id="RHEA-COMP:9696"/>
        <dbReference type="Rhea" id="RHEA-COMP:9697"/>
        <dbReference type="ChEBI" id="CHEBI:30616"/>
        <dbReference type="ChEBI" id="CHEBI:32551"/>
        <dbReference type="ChEBI" id="CHEBI:33019"/>
        <dbReference type="ChEBI" id="CHEBI:78442"/>
        <dbReference type="ChEBI" id="CHEBI:78529"/>
        <dbReference type="ChEBI" id="CHEBI:456215"/>
        <dbReference type="EC" id="6.1.1.6"/>
    </reaction>
</comment>
<comment type="cofactor">
    <cofactor evidence="1">
        <name>Mg(2+)</name>
        <dbReference type="ChEBI" id="CHEBI:18420"/>
    </cofactor>
    <text evidence="1">Binds 3 Mg(2+) ions per subunit.</text>
</comment>
<comment type="subunit">
    <text evidence="1">Homodimer.</text>
</comment>
<comment type="subcellular location">
    <subcellularLocation>
        <location evidence="1">Cytoplasm</location>
    </subcellularLocation>
</comment>
<comment type="similarity">
    <text evidence="1">Belongs to the class-II aminoacyl-tRNA synthetase family.</text>
</comment>
<dbReference type="EC" id="6.1.1.6" evidence="1"/>
<dbReference type="EMBL" id="CP000851">
    <property type="protein sequence ID" value="ABV86084.1"/>
    <property type="molecule type" value="Genomic_DNA"/>
</dbReference>
<dbReference type="RefSeq" id="WP_012154020.1">
    <property type="nucleotide sequence ID" value="NC_009901.1"/>
</dbReference>
<dbReference type="SMR" id="A8H0J7"/>
<dbReference type="STRING" id="398579.Spea_0757"/>
<dbReference type="KEGG" id="spl:Spea_0757"/>
<dbReference type="eggNOG" id="COG1190">
    <property type="taxonomic scope" value="Bacteria"/>
</dbReference>
<dbReference type="HOGENOM" id="CLU_008255_6_0_6"/>
<dbReference type="OrthoDB" id="9802326at2"/>
<dbReference type="Proteomes" id="UP000002608">
    <property type="component" value="Chromosome"/>
</dbReference>
<dbReference type="GO" id="GO:0005829">
    <property type="term" value="C:cytosol"/>
    <property type="evidence" value="ECO:0007669"/>
    <property type="project" value="TreeGrafter"/>
</dbReference>
<dbReference type="GO" id="GO:0005524">
    <property type="term" value="F:ATP binding"/>
    <property type="evidence" value="ECO:0007669"/>
    <property type="project" value="UniProtKB-UniRule"/>
</dbReference>
<dbReference type="GO" id="GO:0004824">
    <property type="term" value="F:lysine-tRNA ligase activity"/>
    <property type="evidence" value="ECO:0007669"/>
    <property type="project" value="UniProtKB-UniRule"/>
</dbReference>
<dbReference type="GO" id="GO:0000287">
    <property type="term" value="F:magnesium ion binding"/>
    <property type="evidence" value="ECO:0007669"/>
    <property type="project" value="UniProtKB-UniRule"/>
</dbReference>
<dbReference type="GO" id="GO:0000049">
    <property type="term" value="F:tRNA binding"/>
    <property type="evidence" value="ECO:0007669"/>
    <property type="project" value="TreeGrafter"/>
</dbReference>
<dbReference type="GO" id="GO:0006430">
    <property type="term" value="P:lysyl-tRNA aminoacylation"/>
    <property type="evidence" value="ECO:0007669"/>
    <property type="project" value="UniProtKB-UniRule"/>
</dbReference>
<dbReference type="CDD" id="cd00775">
    <property type="entry name" value="LysRS_core"/>
    <property type="match status" value="1"/>
</dbReference>
<dbReference type="CDD" id="cd04322">
    <property type="entry name" value="LysRS_N"/>
    <property type="match status" value="1"/>
</dbReference>
<dbReference type="FunFam" id="2.40.50.140:FF:000024">
    <property type="entry name" value="Lysine--tRNA ligase"/>
    <property type="match status" value="1"/>
</dbReference>
<dbReference type="FunFam" id="3.30.930.10:FF:000001">
    <property type="entry name" value="Lysine--tRNA ligase"/>
    <property type="match status" value="1"/>
</dbReference>
<dbReference type="Gene3D" id="3.30.930.10">
    <property type="entry name" value="Bira Bifunctional Protein, Domain 2"/>
    <property type="match status" value="1"/>
</dbReference>
<dbReference type="Gene3D" id="2.40.50.140">
    <property type="entry name" value="Nucleic acid-binding proteins"/>
    <property type="match status" value="1"/>
</dbReference>
<dbReference type="HAMAP" id="MF_00252">
    <property type="entry name" value="Lys_tRNA_synth_class2"/>
    <property type="match status" value="1"/>
</dbReference>
<dbReference type="InterPro" id="IPR004364">
    <property type="entry name" value="Aa-tRNA-synt_II"/>
</dbReference>
<dbReference type="InterPro" id="IPR006195">
    <property type="entry name" value="aa-tRNA-synth_II"/>
</dbReference>
<dbReference type="InterPro" id="IPR045864">
    <property type="entry name" value="aa-tRNA-synth_II/BPL/LPL"/>
</dbReference>
<dbReference type="InterPro" id="IPR002313">
    <property type="entry name" value="Lys-tRNA-ligase_II"/>
</dbReference>
<dbReference type="InterPro" id="IPR044136">
    <property type="entry name" value="Lys-tRNA-ligase_II_N"/>
</dbReference>
<dbReference type="InterPro" id="IPR018149">
    <property type="entry name" value="Lys-tRNA-synth_II_C"/>
</dbReference>
<dbReference type="InterPro" id="IPR012340">
    <property type="entry name" value="NA-bd_OB-fold"/>
</dbReference>
<dbReference type="InterPro" id="IPR004365">
    <property type="entry name" value="NA-bd_OB_tRNA"/>
</dbReference>
<dbReference type="NCBIfam" id="TIGR00499">
    <property type="entry name" value="lysS_bact"/>
    <property type="match status" value="1"/>
</dbReference>
<dbReference type="NCBIfam" id="NF001756">
    <property type="entry name" value="PRK00484.1"/>
    <property type="match status" value="1"/>
</dbReference>
<dbReference type="PANTHER" id="PTHR42918:SF15">
    <property type="entry name" value="LYSINE--TRNA LIGASE, CHLOROPLASTIC_MITOCHONDRIAL"/>
    <property type="match status" value="1"/>
</dbReference>
<dbReference type="PANTHER" id="PTHR42918">
    <property type="entry name" value="LYSYL-TRNA SYNTHETASE"/>
    <property type="match status" value="1"/>
</dbReference>
<dbReference type="Pfam" id="PF00152">
    <property type="entry name" value="tRNA-synt_2"/>
    <property type="match status" value="1"/>
</dbReference>
<dbReference type="Pfam" id="PF01336">
    <property type="entry name" value="tRNA_anti-codon"/>
    <property type="match status" value="1"/>
</dbReference>
<dbReference type="PRINTS" id="PR00982">
    <property type="entry name" value="TRNASYNTHLYS"/>
</dbReference>
<dbReference type="SUPFAM" id="SSF55681">
    <property type="entry name" value="Class II aaRS and biotin synthetases"/>
    <property type="match status" value="1"/>
</dbReference>
<dbReference type="SUPFAM" id="SSF50249">
    <property type="entry name" value="Nucleic acid-binding proteins"/>
    <property type="match status" value="1"/>
</dbReference>
<dbReference type="PROSITE" id="PS50862">
    <property type="entry name" value="AA_TRNA_LIGASE_II"/>
    <property type="match status" value="1"/>
</dbReference>
<organism>
    <name type="scientific">Shewanella pealeana (strain ATCC 700345 / ANG-SQ1)</name>
    <dbReference type="NCBI Taxonomy" id="398579"/>
    <lineage>
        <taxon>Bacteria</taxon>
        <taxon>Pseudomonadati</taxon>
        <taxon>Pseudomonadota</taxon>
        <taxon>Gammaproteobacteria</taxon>
        <taxon>Alteromonadales</taxon>
        <taxon>Shewanellaceae</taxon>
        <taxon>Shewanella</taxon>
    </lineage>
</organism>
<protein>
    <recommendedName>
        <fullName evidence="1">Lysine--tRNA ligase</fullName>
        <ecNumber evidence="1">6.1.1.6</ecNumber>
    </recommendedName>
    <alternativeName>
        <fullName evidence="1">Lysyl-tRNA synthetase</fullName>
        <shortName evidence="1">LysRS</shortName>
    </alternativeName>
</protein>
<sequence length="501" mass="56963">MTEQTQDENKLIAERRAKLEHIRTNCPANGHPNNFDRKHKAADIQAEFGHNTKEELEGMGIERSIAGRVMAKRGPFLVIQDVSGRIQAYAGKDVQKDLKEKFLGLDIGDIIGVTGQLHLSGKGDLYVNMEEYQLLTKALRPLPEKFHGLTDQETRYRQRYVDLIVNEDSREAFIMRSKVVSAIRNFMVKKEFMEVETPMMHSIPGGASARPFETHHNALDIAMYLRIAPELYLKRLVVGGFERVFEINRNFRNEGLSPRHNPEFTMMEFYMAYADFNDLMDLTEEMLSSIATELCGSPQLPYGEHTVDFGGPYARLSMLDAIKKYNPDNATIQSMTYEEVKDVEFMRDLAKSLGMTVEKFWTCGQLLEEIFGETAETQLMQPTFITGYPADISPLARRNDDNHFITDRFEFFIGGREVANGFSELNDAEDQDSRFKAQVDAKDAGDDEAMFYDADYITALEHGLPPTAGQGIGIDRLVMLFTNTHTIRDVILFPAMRPQAN</sequence>
<proteinExistence type="inferred from homology"/>
<evidence type="ECO:0000255" key="1">
    <source>
        <dbReference type="HAMAP-Rule" id="MF_00252"/>
    </source>
</evidence>